<sequence>MPNEVYDVTIIGGGPIGLFSAFYSGLRSMKTKIIDAEPAVGGKVRYFFPEKIIRDIGGIPAITGENLVANLKQQAETFHPTIVCSERVVDVTKLADGTFQLTSHNGSIHFSKTIVIATGSGTFEVNKLEALHAEDFPFAIHYDVKNIEQFRDKVVVVSGGGNSAIDWAQTLEPIAKKVHLIYRGEDFKAHEESVRELKNSRVEIHIHHEISELIGTNNQLTEITVCCNQTQTTKTIETEALFINHGVKVDLGTMAEWGFKQADFGIVVDDEMKTTVPGIFACGDSATYPRKIRIIAAGLHEGPIAINSAKKYLEPTAADEAMISTHHESFIG</sequence>
<name>FENR1_LISMO</name>
<dbReference type="EC" id="1.18.1.2" evidence="1"/>
<dbReference type="EMBL" id="AL591981">
    <property type="protein sequence ID" value="CAD00039.1"/>
    <property type="molecule type" value="Genomic_DNA"/>
</dbReference>
<dbReference type="PIR" id="AI1319">
    <property type="entry name" value="AI1319"/>
</dbReference>
<dbReference type="RefSeq" id="NP_465485.1">
    <property type="nucleotide sequence ID" value="NC_003210.1"/>
</dbReference>
<dbReference type="RefSeq" id="WP_010989848.1">
    <property type="nucleotide sequence ID" value="NZ_CP149495.1"/>
</dbReference>
<dbReference type="SMR" id="Q8Y5U4"/>
<dbReference type="STRING" id="169963.gene:17594646"/>
<dbReference type="PaxDb" id="169963-lmo1961"/>
<dbReference type="DNASU" id="984397"/>
<dbReference type="EnsemblBacteria" id="CAD00039">
    <property type="protein sequence ID" value="CAD00039"/>
    <property type="gene ID" value="CAD00039"/>
</dbReference>
<dbReference type="GeneID" id="984397"/>
<dbReference type="KEGG" id="lmo:lmo1961"/>
<dbReference type="PATRIC" id="fig|169963.11.peg.2008"/>
<dbReference type="eggNOG" id="COG0492">
    <property type="taxonomic scope" value="Bacteria"/>
</dbReference>
<dbReference type="HOGENOM" id="CLU_031864_5_5_9"/>
<dbReference type="OrthoDB" id="9806179at2"/>
<dbReference type="PhylomeDB" id="Q8Y5U4"/>
<dbReference type="BioCyc" id="LMON169963:LMO1961-MONOMER"/>
<dbReference type="Proteomes" id="UP000000817">
    <property type="component" value="Chromosome"/>
</dbReference>
<dbReference type="GO" id="GO:0004324">
    <property type="term" value="F:ferredoxin-NADP+ reductase activity"/>
    <property type="evidence" value="ECO:0007669"/>
    <property type="project" value="UniProtKB-UniRule"/>
</dbReference>
<dbReference type="GO" id="GO:0050660">
    <property type="term" value="F:flavin adenine dinucleotide binding"/>
    <property type="evidence" value="ECO:0007669"/>
    <property type="project" value="UniProtKB-UniRule"/>
</dbReference>
<dbReference type="GO" id="GO:0050661">
    <property type="term" value="F:NADP binding"/>
    <property type="evidence" value="ECO:0007669"/>
    <property type="project" value="UniProtKB-UniRule"/>
</dbReference>
<dbReference type="GO" id="GO:0004791">
    <property type="term" value="F:thioredoxin-disulfide reductase (NADPH) activity"/>
    <property type="evidence" value="ECO:0000318"/>
    <property type="project" value="GO_Central"/>
</dbReference>
<dbReference type="GO" id="GO:0045454">
    <property type="term" value="P:cell redox homeostasis"/>
    <property type="evidence" value="ECO:0000318"/>
    <property type="project" value="GO_Central"/>
</dbReference>
<dbReference type="Gene3D" id="3.50.50.60">
    <property type="entry name" value="FAD/NAD(P)-binding domain"/>
    <property type="match status" value="2"/>
</dbReference>
<dbReference type="HAMAP" id="MF_01685">
    <property type="entry name" value="FENR2"/>
    <property type="match status" value="1"/>
</dbReference>
<dbReference type="InterPro" id="IPR036188">
    <property type="entry name" value="FAD/NAD-bd_sf"/>
</dbReference>
<dbReference type="InterPro" id="IPR023753">
    <property type="entry name" value="FAD/NAD-binding_dom"/>
</dbReference>
<dbReference type="InterPro" id="IPR022890">
    <property type="entry name" value="Fd--NADP_Rdtase_type_2"/>
</dbReference>
<dbReference type="InterPro" id="IPR050097">
    <property type="entry name" value="Ferredoxin-NADP_redctase_2"/>
</dbReference>
<dbReference type="PANTHER" id="PTHR48105">
    <property type="entry name" value="THIOREDOXIN REDUCTASE 1-RELATED-RELATED"/>
    <property type="match status" value="1"/>
</dbReference>
<dbReference type="Pfam" id="PF07992">
    <property type="entry name" value="Pyr_redox_2"/>
    <property type="match status" value="1"/>
</dbReference>
<dbReference type="PRINTS" id="PR00368">
    <property type="entry name" value="FADPNR"/>
</dbReference>
<dbReference type="PRINTS" id="PR00469">
    <property type="entry name" value="PNDRDTASEII"/>
</dbReference>
<dbReference type="SUPFAM" id="SSF51905">
    <property type="entry name" value="FAD/NAD(P)-binding domain"/>
    <property type="match status" value="1"/>
</dbReference>
<keyword id="KW-0274">FAD</keyword>
<keyword id="KW-0285">Flavoprotein</keyword>
<keyword id="KW-0521">NADP</keyword>
<keyword id="KW-0560">Oxidoreductase</keyword>
<keyword id="KW-1185">Reference proteome</keyword>
<evidence type="ECO:0000255" key="1">
    <source>
        <dbReference type="HAMAP-Rule" id="MF_01685"/>
    </source>
</evidence>
<organism>
    <name type="scientific">Listeria monocytogenes serovar 1/2a (strain ATCC BAA-679 / EGD-e)</name>
    <dbReference type="NCBI Taxonomy" id="169963"/>
    <lineage>
        <taxon>Bacteria</taxon>
        <taxon>Bacillati</taxon>
        <taxon>Bacillota</taxon>
        <taxon>Bacilli</taxon>
        <taxon>Bacillales</taxon>
        <taxon>Listeriaceae</taxon>
        <taxon>Listeria</taxon>
    </lineage>
</organism>
<proteinExistence type="inferred from homology"/>
<accession>Q8Y5U4</accession>
<feature type="chain" id="PRO_0000364871" description="Ferredoxin--NADP reductase 1">
    <location>
        <begin position="1"/>
        <end position="332"/>
    </location>
</feature>
<feature type="binding site" evidence="1">
    <location>
        <position position="35"/>
    </location>
    <ligand>
        <name>FAD</name>
        <dbReference type="ChEBI" id="CHEBI:57692"/>
    </ligand>
</feature>
<feature type="binding site" evidence="1">
    <location>
        <position position="43"/>
    </location>
    <ligand>
        <name>FAD</name>
        <dbReference type="ChEBI" id="CHEBI:57692"/>
    </ligand>
</feature>
<feature type="binding site" evidence="1">
    <location>
        <position position="48"/>
    </location>
    <ligand>
        <name>FAD</name>
        <dbReference type="ChEBI" id="CHEBI:57692"/>
    </ligand>
</feature>
<feature type="binding site" evidence="1">
    <location>
        <position position="88"/>
    </location>
    <ligand>
        <name>FAD</name>
        <dbReference type="ChEBI" id="CHEBI:57692"/>
    </ligand>
</feature>
<feature type="binding site" evidence="1">
    <location>
        <position position="123"/>
    </location>
    <ligand>
        <name>FAD</name>
        <dbReference type="ChEBI" id="CHEBI:57692"/>
    </ligand>
</feature>
<feature type="binding site" evidence="1">
    <location>
        <position position="284"/>
    </location>
    <ligand>
        <name>FAD</name>
        <dbReference type="ChEBI" id="CHEBI:57692"/>
    </ligand>
</feature>
<feature type="binding site" evidence="1">
    <location>
        <position position="325"/>
    </location>
    <ligand>
        <name>FAD</name>
        <dbReference type="ChEBI" id="CHEBI:57692"/>
    </ligand>
</feature>
<comment type="catalytic activity">
    <reaction evidence="1">
        <text>2 reduced [2Fe-2S]-[ferredoxin] + NADP(+) + H(+) = 2 oxidized [2Fe-2S]-[ferredoxin] + NADPH</text>
        <dbReference type="Rhea" id="RHEA:20125"/>
        <dbReference type="Rhea" id="RHEA-COMP:10000"/>
        <dbReference type="Rhea" id="RHEA-COMP:10001"/>
        <dbReference type="ChEBI" id="CHEBI:15378"/>
        <dbReference type="ChEBI" id="CHEBI:33737"/>
        <dbReference type="ChEBI" id="CHEBI:33738"/>
        <dbReference type="ChEBI" id="CHEBI:57783"/>
        <dbReference type="ChEBI" id="CHEBI:58349"/>
        <dbReference type="EC" id="1.18.1.2"/>
    </reaction>
</comment>
<comment type="cofactor">
    <cofactor evidence="1">
        <name>FAD</name>
        <dbReference type="ChEBI" id="CHEBI:57692"/>
    </cofactor>
    <text evidence="1">Binds 1 FAD per subunit.</text>
</comment>
<comment type="subunit">
    <text evidence="1">Homodimer.</text>
</comment>
<comment type="similarity">
    <text evidence="1">Belongs to the ferredoxin--NADP reductase type 2 family.</text>
</comment>
<reference key="1">
    <citation type="journal article" date="2001" name="Science">
        <title>Comparative genomics of Listeria species.</title>
        <authorList>
            <person name="Glaser P."/>
            <person name="Frangeul L."/>
            <person name="Buchrieser C."/>
            <person name="Rusniok C."/>
            <person name="Amend A."/>
            <person name="Baquero F."/>
            <person name="Berche P."/>
            <person name="Bloecker H."/>
            <person name="Brandt P."/>
            <person name="Chakraborty T."/>
            <person name="Charbit A."/>
            <person name="Chetouani F."/>
            <person name="Couve E."/>
            <person name="de Daruvar A."/>
            <person name="Dehoux P."/>
            <person name="Domann E."/>
            <person name="Dominguez-Bernal G."/>
            <person name="Duchaud E."/>
            <person name="Durant L."/>
            <person name="Dussurget O."/>
            <person name="Entian K.-D."/>
            <person name="Fsihi H."/>
            <person name="Garcia-del Portillo F."/>
            <person name="Garrido P."/>
            <person name="Gautier L."/>
            <person name="Goebel W."/>
            <person name="Gomez-Lopez N."/>
            <person name="Hain T."/>
            <person name="Hauf J."/>
            <person name="Jackson D."/>
            <person name="Jones L.-M."/>
            <person name="Kaerst U."/>
            <person name="Kreft J."/>
            <person name="Kuhn M."/>
            <person name="Kunst F."/>
            <person name="Kurapkat G."/>
            <person name="Madueno E."/>
            <person name="Maitournam A."/>
            <person name="Mata Vicente J."/>
            <person name="Ng E."/>
            <person name="Nedjari H."/>
            <person name="Nordsiek G."/>
            <person name="Novella S."/>
            <person name="de Pablos B."/>
            <person name="Perez-Diaz J.-C."/>
            <person name="Purcell R."/>
            <person name="Remmel B."/>
            <person name="Rose M."/>
            <person name="Schlueter T."/>
            <person name="Simoes N."/>
            <person name="Tierrez A."/>
            <person name="Vazquez-Boland J.-A."/>
            <person name="Voss H."/>
            <person name="Wehland J."/>
            <person name="Cossart P."/>
        </authorList>
    </citation>
    <scope>NUCLEOTIDE SEQUENCE [LARGE SCALE GENOMIC DNA]</scope>
    <source>
        <strain>ATCC BAA-679 / EGD-e</strain>
    </source>
</reference>
<protein>
    <recommendedName>
        <fullName evidence="1">Ferredoxin--NADP reductase 1</fullName>
        <shortName evidence="1">FNR 1</shortName>
        <shortName evidence="1">Fd-NADP(+) reductase 1</shortName>
        <ecNumber evidence="1">1.18.1.2</ecNumber>
    </recommendedName>
</protein>
<gene>
    <name type="ordered locus">lmo1961</name>
</gene>